<dbReference type="EC" id="3.2.2.23" evidence="2"/>
<dbReference type="EC" id="4.2.99.18" evidence="2"/>
<dbReference type="EMBL" id="CP000524">
    <property type="protein sequence ID" value="ABM44916.1"/>
    <property type="molecule type" value="Genomic_DNA"/>
</dbReference>
<dbReference type="RefSeq" id="WP_005767917.1">
    <property type="nucleotide sequence ID" value="NC_008783.1"/>
</dbReference>
<dbReference type="SMR" id="A1UU20"/>
<dbReference type="STRING" id="360095.BARBAKC583_1221"/>
<dbReference type="GeneID" id="4684489"/>
<dbReference type="KEGG" id="bbk:BARBAKC583_1221"/>
<dbReference type="PATRIC" id="fig|360095.6.peg.1191"/>
<dbReference type="eggNOG" id="COG0266">
    <property type="taxonomic scope" value="Bacteria"/>
</dbReference>
<dbReference type="HOGENOM" id="CLU_038423_1_1_5"/>
<dbReference type="OrthoDB" id="9800855at2"/>
<dbReference type="Proteomes" id="UP000000643">
    <property type="component" value="Chromosome"/>
</dbReference>
<dbReference type="GO" id="GO:0034039">
    <property type="term" value="F:8-oxo-7,8-dihydroguanine DNA N-glycosylase activity"/>
    <property type="evidence" value="ECO:0007669"/>
    <property type="project" value="TreeGrafter"/>
</dbReference>
<dbReference type="GO" id="GO:0140078">
    <property type="term" value="F:class I DNA-(apurinic or apyrimidinic site) endonuclease activity"/>
    <property type="evidence" value="ECO:0007669"/>
    <property type="project" value="UniProtKB-EC"/>
</dbReference>
<dbReference type="GO" id="GO:0003684">
    <property type="term" value="F:damaged DNA binding"/>
    <property type="evidence" value="ECO:0007669"/>
    <property type="project" value="InterPro"/>
</dbReference>
<dbReference type="GO" id="GO:0008270">
    <property type="term" value="F:zinc ion binding"/>
    <property type="evidence" value="ECO:0007669"/>
    <property type="project" value="UniProtKB-UniRule"/>
</dbReference>
<dbReference type="GO" id="GO:0006284">
    <property type="term" value="P:base-excision repair"/>
    <property type="evidence" value="ECO:0007669"/>
    <property type="project" value="InterPro"/>
</dbReference>
<dbReference type="CDD" id="cd08966">
    <property type="entry name" value="EcFpg-like_N"/>
    <property type="match status" value="1"/>
</dbReference>
<dbReference type="FunFam" id="1.10.8.50:FF:000003">
    <property type="entry name" value="Formamidopyrimidine-DNA glycosylase"/>
    <property type="match status" value="1"/>
</dbReference>
<dbReference type="Gene3D" id="1.10.8.50">
    <property type="match status" value="1"/>
</dbReference>
<dbReference type="Gene3D" id="3.20.190.10">
    <property type="entry name" value="MutM-like, N-terminal"/>
    <property type="match status" value="1"/>
</dbReference>
<dbReference type="HAMAP" id="MF_00103">
    <property type="entry name" value="Fapy_DNA_glycosyl"/>
    <property type="match status" value="1"/>
</dbReference>
<dbReference type="InterPro" id="IPR015886">
    <property type="entry name" value="DNA_glyclase/AP_lyase_DNA-bd"/>
</dbReference>
<dbReference type="InterPro" id="IPR015887">
    <property type="entry name" value="DNA_glyclase_Znf_dom_DNA_BS"/>
</dbReference>
<dbReference type="InterPro" id="IPR020629">
    <property type="entry name" value="Formamido-pyr_DNA_Glyclase"/>
</dbReference>
<dbReference type="InterPro" id="IPR012319">
    <property type="entry name" value="FPG_cat"/>
</dbReference>
<dbReference type="InterPro" id="IPR035937">
    <property type="entry name" value="MutM-like_N-ter"/>
</dbReference>
<dbReference type="InterPro" id="IPR010979">
    <property type="entry name" value="Ribosomal_uS13-like_H2TH"/>
</dbReference>
<dbReference type="InterPro" id="IPR000214">
    <property type="entry name" value="Znf_DNA_glyclase/AP_lyase"/>
</dbReference>
<dbReference type="InterPro" id="IPR010663">
    <property type="entry name" value="Znf_FPG/IleRS"/>
</dbReference>
<dbReference type="NCBIfam" id="TIGR00577">
    <property type="entry name" value="fpg"/>
    <property type="match status" value="1"/>
</dbReference>
<dbReference type="NCBIfam" id="NF002211">
    <property type="entry name" value="PRK01103.1"/>
    <property type="match status" value="1"/>
</dbReference>
<dbReference type="PANTHER" id="PTHR22993">
    <property type="entry name" value="FORMAMIDOPYRIMIDINE-DNA GLYCOSYLASE"/>
    <property type="match status" value="1"/>
</dbReference>
<dbReference type="PANTHER" id="PTHR22993:SF9">
    <property type="entry name" value="FORMAMIDOPYRIMIDINE-DNA GLYCOSYLASE"/>
    <property type="match status" value="1"/>
</dbReference>
<dbReference type="Pfam" id="PF01149">
    <property type="entry name" value="Fapy_DNA_glyco"/>
    <property type="match status" value="1"/>
</dbReference>
<dbReference type="Pfam" id="PF06831">
    <property type="entry name" value="H2TH"/>
    <property type="match status" value="1"/>
</dbReference>
<dbReference type="Pfam" id="PF06827">
    <property type="entry name" value="zf-FPG_IleRS"/>
    <property type="match status" value="1"/>
</dbReference>
<dbReference type="SMART" id="SM00898">
    <property type="entry name" value="Fapy_DNA_glyco"/>
    <property type="match status" value="1"/>
</dbReference>
<dbReference type="SMART" id="SM01232">
    <property type="entry name" value="H2TH"/>
    <property type="match status" value="1"/>
</dbReference>
<dbReference type="SUPFAM" id="SSF57716">
    <property type="entry name" value="Glucocorticoid receptor-like (DNA-binding domain)"/>
    <property type="match status" value="1"/>
</dbReference>
<dbReference type="SUPFAM" id="SSF81624">
    <property type="entry name" value="N-terminal domain of MutM-like DNA repair proteins"/>
    <property type="match status" value="1"/>
</dbReference>
<dbReference type="SUPFAM" id="SSF46946">
    <property type="entry name" value="S13-like H2TH domain"/>
    <property type="match status" value="1"/>
</dbReference>
<dbReference type="PROSITE" id="PS51068">
    <property type="entry name" value="FPG_CAT"/>
    <property type="match status" value="1"/>
</dbReference>
<dbReference type="PROSITE" id="PS01242">
    <property type="entry name" value="ZF_FPG_1"/>
    <property type="match status" value="1"/>
</dbReference>
<dbReference type="PROSITE" id="PS51066">
    <property type="entry name" value="ZF_FPG_2"/>
    <property type="match status" value="1"/>
</dbReference>
<feature type="initiator methionine" description="Removed" evidence="1">
    <location>
        <position position="1"/>
    </location>
</feature>
<feature type="chain" id="PRO_1000008675" description="Formamidopyrimidine-DNA glycosylase">
    <location>
        <begin position="2"/>
        <end position="291"/>
    </location>
</feature>
<feature type="zinc finger region" description="FPG-type" evidence="2">
    <location>
        <begin position="257"/>
        <end position="291"/>
    </location>
</feature>
<feature type="active site" description="Schiff-base intermediate with DNA" evidence="2">
    <location>
        <position position="2"/>
    </location>
</feature>
<feature type="active site" description="Proton donor" evidence="2">
    <location>
        <position position="3"/>
    </location>
</feature>
<feature type="active site" description="Proton donor; for beta-elimination activity" evidence="2">
    <location>
        <position position="58"/>
    </location>
</feature>
<feature type="active site" description="Proton donor; for delta-elimination activity" evidence="2">
    <location>
        <position position="281"/>
    </location>
</feature>
<feature type="binding site" evidence="2">
    <location>
        <position position="100"/>
    </location>
    <ligand>
        <name>DNA</name>
        <dbReference type="ChEBI" id="CHEBI:16991"/>
    </ligand>
</feature>
<feature type="binding site" evidence="2">
    <location>
        <position position="123"/>
    </location>
    <ligand>
        <name>DNA</name>
        <dbReference type="ChEBI" id="CHEBI:16991"/>
    </ligand>
</feature>
<feature type="binding site" evidence="2">
    <location>
        <position position="166"/>
    </location>
    <ligand>
        <name>DNA</name>
        <dbReference type="ChEBI" id="CHEBI:16991"/>
    </ligand>
</feature>
<accession>A1UU20</accession>
<gene>
    <name evidence="2" type="primary">mutM</name>
    <name evidence="2" type="synonym">fpg</name>
    <name type="ordered locus">BARBAKC583_1221</name>
</gene>
<evidence type="ECO:0000250" key="1"/>
<evidence type="ECO:0000255" key="2">
    <source>
        <dbReference type="HAMAP-Rule" id="MF_00103"/>
    </source>
</evidence>
<sequence>MPELPEVETVRRGLEPVLMGSRIISVSLGCKNLRFPFPESFSERLTGRIIIKLSRRAKYLLFHLSQNETIVSHLGMSGSWRVEDDLLRKKHSYMGKLVAHDHFIMSFQATNGKIYRLIYNDSRRFGFMLLADTMRLYEHPLLRNLGLEPIDNAVSGAYLQKAFINKKTSLKAALLDQSIVAGLGNIYVCEALWRSYLSPERRALTLASKSAHACELAKCLAQNICDVISEAIFSGGSSLRDYVHIDGSLGYFQHCFSVYGREGKECSRCGMHIVRIVQSGRSSFYCPQCQK</sequence>
<protein>
    <recommendedName>
        <fullName evidence="2">Formamidopyrimidine-DNA glycosylase</fullName>
        <shortName evidence="2">Fapy-DNA glycosylase</shortName>
        <ecNumber evidence="2">3.2.2.23</ecNumber>
    </recommendedName>
    <alternativeName>
        <fullName evidence="2">DNA-(apurinic or apyrimidinic site) lyase MutM</fullName>
        <shortName evidence="2">AP lyase MutM</shortName>
        <ecNumber evidence="2">4.2.99.18</ecNumber>
    </alternativeName>
</protein>
<keyword id="KW-0227">DNA damage</keyword>
<keyword id="KW-0234">DNA repair</keyword>
<keyword id="KW-0238">DNA-binding</keyword>
<keyword id="KW-0326">Glycosidase</keyword>
<keyword id="KW-0378">Hydrolase</keyword>
<keyword id="KW-0456">Lyase</keyword>
<keyword id="KW-0479">Metal-binding</keyword>
<keyword id="KW-0511">Multifunctional enzyme</keyword>
<keyword id="KW-0862">Zinc</keyword>
<keyword id="KW-0863">Zinc-finger</keyword>
<reference key="1">
    <citation type="submission" date="2006-12" db="EMBL/GenBank/DDBJ databases">
        <authorList>
            <person name="Hendrix L."/>
            <person name="Mohamoud Y."/>
            <person name="Radune D."/>
            <person name="Shvartsbeyn A."/>
            <person name="Daugherty S."/>
            <person name="Dodson R."/>
            <person name="Durkin A.S."/>
            <person name="Harkins D."/>
            <person name="Huot H."/>
            <person name="Kothari S.P."/>
            <person name="Madupu R."/>
            <person name="Li J."/>
            <person name="Nelson W.C."/>
            <person name="Shrivastava S."/>
            <person name="Giglio M.G."/>
            <person name="Haft D."/>
            <person name="Selengut J."/>
            <person name="Fraser-Ligget C."/>
            <person name="Seshadri R."/>
        </authorList>
    </citation>
    <scope>NUCLEOTIDE SEQUENCE [LARGE SCALE GENOMIC DNA]</scope>
    <source>
        <strain>ATCC 35685 / KC583 / Herrer 020/F12,63</strain>
    </source>
</reference>
<comment type="function">
    <text evidence="2">Involved in base excision repair of DNA damaged by oxidation or by mutagenic agents. Acts as a DNA glycosylase that recognizes and removes damaged bases. Has a preference for oxidized purines, such as 7,8-dihydro-8-oxoguanine (8-oxoG). Has AP (apurinic/apyrimidinic) lyase activity and introduces nicks in the DNA strand. Cleaves the DNA backbone by beta-delta elimination to generate a single-strand break at the site of the removed base with both 3'- and 5'-phosphates.</text>
</comment>
<comment type="catalytic activity">
    <reaction evidence="2">
        <text>Hydrolysis of DNA containing ring-opened 7-methylguanine residues, releasing 2,6-diamino-4-hydroxy-5-(N-methyl)formamidopyrimidine.</text>
        <dbReference type="EC" id="3.2.2.23"/>
    </reaction>
</comment>
<comment type="catalytic activity">
    <reaction evidence="2">
        <text>2'-deoxyribonucleotide-(2'-deoxyribose 5'-phosphate)-2'-deoxyribonucleotide-DNA = a 3'-end 2'-deoxyribonucleotide-(2,3-dehydro-2,3-deoxyribose 5'-phosphate)-DNA + a 5'-end 5'-phospho-2'-deoxyribonucleoside-DNA + H(+)</text>
        <dbReference type="Rhea" id="RHEA:66592"/>
        <dbReference type="Rhea" id="RHEA-COMP:13180"/>
        <dbReference type="Rhea" id="RHEA-COMP:16897"/>
        <dbReference type="Rhea" id="RHEA-COMP:17067"/>
        <dbReference type="ChEBI" id="CHEBI:15378"/>
        <dbReference type="ChEBI" id="CHEBI:136412"/>
        <dbReference type="ChEBI" id="CHEBI:157695"/>
        <dbReference type="ChEBI" id="CHEBI:167181"/>
        <dbReference type="EC" id="4.2.99.18"/>
    </reaction>
</comment>
<comment type="cofactor">
    <cofactor evidence="2">
        <name>Zn(2+)</name>
        <dbReference type="ChEBI" id="CHEBI:29105"/>
    </cofactor>
    <text evidence="2">Binds 1 zinc ion per subunit.</text>
</comment>
<comment type="subunit">
    <text evidence="2">Monomer.</text>
</comment>
<comment type="similarity">
    <text evidence="2">Belongs to the FPG family.</text>
</comment>
<proteinExistence type="inferred from homology"/>
<name>FPG_BARBK</name>
<organism>
    <name type="scientific">Bartonella bacilliformis (strain ATCC 35685 / KC583 / Herrer 020/F12,63)</name>
    <dbReference type="NCBI Taxonomy" id="360095"/>
    <lineage>
        <taxon>Bacteria</taxon>
        <taxon>Pseudomonadati</taxon>
        <taxon>Pseudomonadota</taxon>
        <taxon>Alphaproteobacteria</taxon>
        <taxon>Hyphomicrobiales</taxon>
        <taxon>Bartonellaceae</taxon>
        <taxon>Bartonella</taxon>
    </lineage>
</organism>